<comment type="function">
    <text evidence="1">Myoactive.</text>
</comment>
<comment type="subcellular location">
    <subcellularLocation>
        <location evidence="6">Secreted</location>
    </subcellularLocation>
</comment>
<comment type="similarity">
    <text evidence="2">Belongs to the pyrokinin family.</text>
</comment>
<protein>
    <recommendedName>
        <fullName evidence="4">CAPA-Pyrokinin</fullName>
        <shortName evidence="4">CAPA-PK</shortName>
    </recommendedName>
    <alternativeName>
        <fullName evidence="1">FXPRL-amide</fullName>
    </alternativeName>
</protein>
<keyword id="KW-0027">Amidation</keyword>
<keyword id="KW-0903">Direct protein sequencing</keyword>
<keyword id="KW-0527">Neuropeptide</keyword>
<keyword id="KW-0964">Secreted</keyword>
<dbReference type="GO" id="GO:0005576">
    <property type="term" value="C:extracellular region"/>
    <property type="evidence" value="ECO:0007669"/>
    <property type="project" value="UniProtKB-SubCell"/>
</dbReference>
<dbReference type="GO" id="GO:0005184">
    <property type="term" value="F:neuropeptide hormone activity"/>
    <property type="evidence" value="ECO:0007669"/>
    <property type="project" value="InterPro"/>
</dbReference>
<dbReference type="GO" id="GO:0007218">
    <property type="term" value="P:neuropeptide signaling pathway"/>
    <property type="evidence" value="ECO:0007669"/>
    <property type="project" value="UniProtKB-KW"/>
</dbReference>
<dbReference type="InterPro" id="IPR001484">
    <property type="entry name" value="Pyrokinin_CS"/>
</dbReference>
<dbReference type="PROSITE" id="PS00539">
    <property type="entry name" value="PYROKININ"/>
    <property type="match status" value="1"/>
</dbReference>
<organism>
    <name type="scientific">Karoophasma botterkloofense</name>
    <name type="common">Gladiator</name>
    <name type="synonym">Heel-walker</name>
    <dbReference type="NCBI Taxonomy" id="253132"/>
    <lineage>
        <taxon>Eukaryota</taxon>
        <taxon>Metazoa</taxon>
        <taxon>Ecdysozoa</taxon>
        <taxon>Arthropoda</taxon>
        <taxon>Hexapoda</taxon>
        <taxon>Insecta</taxon>
        <taxon>Pterygota</taxon>
        <taxon>Neoptera</taxon>
        <taxon>Polyneoptera</taxon>
        <taxon>Mantophasmatodea</taxon>
        <taxon>Austrophasmatidae</taxon>
        <taxon>Karoophasma</taxon>
    </lineage>
</organism>
<evidence type="ECO:0000250" key="1">
    <source>
        <dbReference type="UniProtKB" id="P82617"/>
    </source>
</evidence>
<evidence type="ECO:0000255" key="2"/>
<evidence type="ECO:0000269" key="3">
    <source>
    </source>
</evidence>
<evidence type="ECO:0000303" key="4">
    <source>
    </source>
</evidence>
<evidence type="ECO:0000305" key="5"/>
<evidence type="ECO:0000305" key="6">
    <source>
    </source>
</evidence>
<proteinExistence type="evidence at protein level"/>
<accession>B0M3E5</accession>
<reference evidence="5" key="1">
    <citation type="journal article" date="2012" name="Syst. Biol.">
        <title>Peptidomics-based phylogeny and biogeography of Mantophasmatodea (Hexapoda).</title>
        <authorList>
            <person name="Predel R."/>
            <person name="Neupert S."/>
            <person name="Huetteroth W."/>
            <person name="Kahnt J."/>
            <person name="Waidelich D."/>
            <person name="Roth S."/>
        </authorList>
    </citation>
    <scope>PROTEIN SEQUENCE</scope>
    <scope>AMIDATION AT LEU-15</scope>
    <source>
        <tissue evidence="3">Abdominal perisympathetic organs</tissue>
    </source>
</reference>
<name>PPK4_KARBO</name>
<feature type="peptide" id="PRO_0000421605" description="CAPA-Pyrokinin" evidence="3">
    <location>
        <begin position="1"/>
        <end position="15"/>
    </location>
</feature>
<feature type="modified residue" description="Leucine amide" evidence="3">
    <location>
        <position position="15"/>
    </location>
</feature>
<sequence>SGGGDGSGMWFGPRL</sequence>